<comment type="catalytic activity">
    <reaction>
        <text>a uridine in RNA = a pseudouridine in RNA</text>
        <dbReference type="Rhea" id="RHEA:48348"/>
        <dbReference type="Rhea" id="RHEA-COMP:12068"/>
        <dbReference type="Rhea" id="RHEA-COMP:12069"/>
        <dbReference type="ChEBI" id="CHEBI:65314"/>
        <dbReference type="ChEBI" id="CHEBI:65315"/>
    </reaction>
</comment>
<comment type="similarity">
    <text evidence="2">Belongs to the pseudouridine synthase RluA family.</text>
</comment>
<reference key="1">
    <citation type="journal article" date="1998" name="J. Bacteriol.">
        <title>Purification of the pyruvate dehydrogenase multienzyme complex of Zymomonas mobilis and identification and sequence analysis of the corresponding genes.</title>
        <authorList>
            <person name="Neveling U."/>
            <person name="Klasen R."/>
            <person name="Bringer-Meyer S."/>
            <person name="Sahm H."/>
        </authorList>
    </citation>
    <scope>NUCLEOTIDE SEQUENCE [GENOMIC DNA]</scope>
    <source>
        <strain>ATCC 29191 / DSM 3580 / JCM 10190 / CECT 560 / NBRC 13756 / NCIMB 11199 / NRRL B-4490 / ZM6</strain>
    </source>
</reference>
<reference key="2">
    <citation type="journal article" date="2005" name="Nat. Biotechnol.">
        <title>The genome sequence of the ethanologenic bacterium Zymomonas mobilis ZM4.</title>
        <authorList>
            <person name="Seo J.-S."/>
            <person name="Chong H."/>
            <person name="Park H.S."/>
            <person name="Yoon K.-O."/>
            <person name="Jung C."/>
            <person name="Kim J.J."/>
            <person name="Hong J.H."/>
            <person name="Kim H."/>
            <person name="Kim J.-H."/>
            <person name="Kil J.-I."/>
            <person name="Park C.J."/>
            <person name="Oh H.-M."/>
            <person name="Lee J.-S."/>
            <person name="Jin S.-J."/>
            <person name="Um H.-W."/>
            <person name="Lee H.-J."/>
            <person name="Oh S.-J."/>
            <person name="Kim J.Y."/>
            <person name="Kang H.L."/>
            <person name="Lee S.Y."/>
            <person name="Lee K.J."/>
            <person name="Kang H.S."/>
        </authorList>
    </citation>
    <scope>NUCLEOTIDE SEQUENCE [LARGE SCALE GENOMIC DNA]</scope>
    <source>
        <strain>ATCC 31821 / ZM4 / CP4</strain>
    </source>
</reference>
<evidence type="ECO:0000250" key="1"/>
<evidence type="ECO:0000305" key="2"/>
<sequence>MPILAKRVLFIDAEAMIIDKPAGLPVTSVRDGSLSLENYLASLCFGFKRWPSIVHRLDRDTSGCLLLARNPKMHRRLSEAFSQGQVKKCYWAILEGVPEKNEGIIDLPLLKISSPKSGWRIVADDKGKRAVTHWEILAKNKGRSLVAFRPETGRTHQLRVHAATGLGLPIVGDPFYGSHKDENISRMMLHAHSLEIARLEKKPITAEAPLPKAFTDLGF</sequence>
<keyword id="KW-0413">Isomerase</keyword>
<keyword id="KW-1185">Reference proteome</keyword>
<feature type="chain" id="PRO_0000162748" description="Uncharacterized RNA pseudouridine synthase ZMO0505">
    <location>
        <begin position="1"/>
        <end position="219"/>
    </location>
</feature>
<feature type="active site" evidence="1">
    <location>
        <position position="58"/>
    </location>
</feature>
<feature type="sequence conflict" description="In Ref. 1; CAA63803." evidence="2" ref="1">
    <original>K</original>
    <variation>E</variation>
    <location>
        <position position="6"/>
    </location>
</feature>
<feature type="sequence conflict" description="In Ref. 1; CAA63803." evidence="2" ref="1">
    <original>I</original>
    <variation>T</variation>
    <location>
        <position position="104"/>
    </location>
</feature>
<feature type="sequence conflict" description="In Ref. 1; CAA63803." evidence="2" ref="1">
    <original>G</original>
    <variation>S</variation>
    <location>
        <position position="177"/>
    </location>
</feature>
<feature type="sequence conflict" description="In Ref. 1; CAA63803." evidence="2" ref="1">
    <original>T</original>
    <variation>A</variation>
    <location>
        <position position="205"/>
    </location>
</feature>
<organism>
    <name type="scientific">Zymomonas mobilis subsp. mobilis (strain ATCC 31821 / ZM4 / CP4)</name>
    <dbReference type="NCBI Taxonomy" id="264203"/>
    <lineage>
        <taxon>Bacteria</taxon>
        <taxon>Pseudomonadati</taxon>
        <taxon>Pseudomonadota</taxon>
        <taxon>Alphaproteobacteria</taxon>
        <taxon>Sphingomonadales</taxon>
        <taxon>Zymomonadaceae</taxon>
        <taxon>Zymomonas</taxon>
    </lineage>
</organism>
<proteinExistence type="inferred from homology"/>
<protein>
    <recommendedName>
        <fullName>Uncharacterized RNA pseudouridine synthase ZMO0505</fullName>
        <ecNumber>5.4.99.-</ecNumber>
    </recommendedName>
    <alternativeName>
        <fullName>RNA pseudouridylate synthase</fullName>
    </alternativeName>
    <alternativeName>
        <fullName>RNA-uridine isomerase</fullName>
    </alternativeName>
</protein>
<name>Y505_ZYMMO</name>
<gene>
    <name type="ordered locus">ZMO0505</name>
</gene>
<accession>O66114</accession>
<accession>Q5NQ76</accession>
<dbReference type="EC" id="5.4.99.-"/>
<dbReference type="EMBL" id="X93605">
    <property type="protein sequence ID" value="CAA63803.1"/>
    <property type="molecule type" value="Genomic_DNA"/>
</dbReference>
<dbReference type="EMBL" id="AE008692">
    <property type="protein sequence ID" value="AAV89129.1"/>
    <property type="molecule type" value="Genomic_DNA"/>
</dbReference>
<dbReference type="RefSeq" id="WP_011240409.1">
    <property type="nucleotide sequence ID" value="NZ_CP035711.1"/>
</dbReference>
<dbReference type="SMR" id="O66114"/>
<dbReference type="STRING" id="264203.ZMO0505"/>
<dbReference type="KEGG" id="zmo:ZMO0505"/>
<dbReference type="eggNOG" id="COG0564">
    <property type="taxonomic scope" value="Bacteria"/>
</dbReference>
<dbReference type="HOGENOM" id="CLU_016902_11_1_5"/>
<dbReference type="Proteomes" id="UP000001173">
    <property type="component" value="Chromosome"/>
</dbReference>
<dbReference type="GO" id="GO:0140098">
    <property type="term" value="F:catalytic activity, acting on RNA"/>
    <property type="evidence" value="ECO:0007669"/>
    <property type="project" value="UniProtKB-ARBA"/>
</dbReference>
<dbReference type="GO" id="GO:0009982">
    <property type="term" value="F:pseudouridine synthase activity"/>
    <property type="evidence" value="ECO:0007669"/>
    <property type="project" value="InterPro"/>
</dbReference>
<dbReference type="GO" id="GO:0003723">
    <property type="term" value="F:RNA binding"/>
    <property type="evidence" value="ECO:0007669"/>
    <property type="project" value="InterPro"/>
</dbReference>
<dbReference type="GO" id="GO:0000455">
    <property type="term" value="P:enzyme-directed rRNA pseudouridine synthesis"/>
    <property type="evidence" value="ECO:0007669"/>
    <property type="project" value="TreeGrafter"/>
</dbReference>
<dbReference type="CDD" id="cd02869">
    <property type="entry name" value="PseudoU_synth_RluA_like"/>
    <property type="match status" value="1"/>
</dbReference>
<dbReference type="Gene3D" id="3.30.2350.10">
    <property type="entry name" value="Pseudouridine synthase"/>
    <property type="match status" value="1"/>
</dbReference>
<dbReference type="InterPro" id="IPR020103">
    <property type="entry name" value="PsdUridine_synth_cat_dom_sf"/>
</dbReference>
<dbReference type="InterPro" id="IPR006224">
    <property type="entry name" value="PsdUridine_synth_RluA-like_CS"/>
</dbReference>
<dbReference type="InterPro" id="IPR006145">
    <property type="entry name" value="PsdUridine_synth_RsuA/RluA"/>
</dbReference>
<dbReference type="InterPro" id="IPR050188">
    <property type="entry name" value="RluA_PseudoU_synthase"/>
</dbReference>
<dbReference type="PANTHER" id="PTHR21600">
    <property type="entry name" value="MITOCHONDRIAL RNA PSEUDOURIDINE SYNTHASE"/>
    <property type="match status" value="1"/>
</dbReference>
<dbReference type="PANTHER" id="PTHR21600:SF44">
    <property type="entry name" value="RIBOSOMAL LARGE SUBUNIT PSEUDOURIDINE SYNTHASE D"/>
    <property type="match status" value="1"/>
</dbReference>
<dbReference type="Pfam" id="PF00849">
    <property type="entry name" value="PseudoU_synth_2"/>
    <property type="match status" value="1"/>
</dbReference>
<dbReference type="SUPFAM" id="SSF55120">
    <property type="entry name" value="Pseudouridine synthase"/>
    <property type="match status" value="1"/>
</dbReference>
<dbReference type="PROSITE" id="PS01129">
    <property type="entry name" value="PSI_RLU"/>
    <property type="match status" value="1"/>
</dbReference>